<feature type="chain" id="PRO_0000211995" description="Arginine kinase">
    <location>
        <begin position="1"/>
        <end position="356"/>
    </location>
</feature>
<feature type="domain" description="Phosphagen kinase N-terminal" evidence="2">
    <location>
        <begin position="9"/>
        <end position="91"/>
    </location>
</feature>
<feature type="domain" description="Phosphagen kinase C-terminal" evidence="3">
    <location>
        <begin position="119"/>
        <end position="356"/>
    </location>
</feature>
<feature type="binding site" evidence="1">
    <location>
        <begin position="64"/>
        <end position="68"/>
    </location>
    <ligand>
        <name>L-arginine</name>
        <dbReference type="ChEBI" id="CHEBI:32682"/>
    </ligand>
</feature>
<feature type="binding site" evidence="3">
    <location>
        <begin position="122"/>
        <end position="126"/>
    </location>
    <ligand>
        <name>ATP</name>
        <dbReference type="ChEBI" id="CHEBI:30616"/>
    </ligand>
</feature>
<feature type="binding site" evidence="3">
    <location>
        <position position="185"/>
    </location>
    <ligand>
        <name>ATP</name>
        <dbReference type="ChEBI" id="CHEBI:30616"/>
    </ligand>
</feature>
<feature type="binding site" evidence="1">
    <location>
        <position position="225"/>
    </location>
    <ligand>
        <name>L-arginine</name>
        <dbReference type="ChEBI" id="CHEBI:32682"/>
    </ligand>
</feature>
<feature type="binding site" evidence="3">
    <location>
        <position position="229"/>
    </location>
    <ligand>
        <name>ATP</name>
        <dbReference type="ChEBI" id="CHEBI:30616"/>
    </ligand>
</feature>
<feature type="binding site" evidence="1">
    <location>
        <position position="271"/>
    </location>
    <ligand>
        <name>L-arginine</name>
        <dbReference type="ChEBI" id="CHEBI:32682"/>
    </ligand>
</feature>
<feature type="binding site" evidence="3">
    <location>
        <begin position="280"/>
        <end position="284"/>
    </location>
    <ligand>
        <name>ATP</name>
        <dbReference type="ChEBI" id="CHEBI:30616"/>
    </ligand>
</feature>
<feature type="binding site" evidence="3">
    <location>
        <begin position="309"/>
        <end position="314"/>
    </location>
    <ligand>
        <name>ATP</name>
        <dbReference type="ChEBI" id="CHEBI:30616"/>
    </ligand>
</feature>
<feature type="binding site" evidence="1">
    <location>
        <position position="314"/>
    </location>
    <ligand>
        <name>L-arginine</name>
        <dbReference type="ChEBI" id="CHEBI:32682"/>
    </ligand>
</feature>
<accession>Q95V58</accession>
<dbReference type="EC" id="2.7.3.3"/>
<dbReference type="EMBL" id="AF426741">
    <property type="protein sequence ID" value="AAL25092.1"/>
    <property type="molecule type" value="mRNA"/>
</dbReference>
<dbReference type="SMR" id="Q95V58"/>
<dbReference type="GO" id="GO:0005615">
    <property type="term" value="C:extracellular space"/>
    <property type="evidence" value="ECO:0007669"/>
    <property type="project" value="TreeGrafter"/>
</dbReference>
<dbReference type="GO" id="GO:0004054">
    <property type="term" value="F:arginine kinase activity"/>
    <property type="evidence" value="ECO:0000250"/>
    <property type="project" value="UniProtKB"/>
</dbReference>
<dbReference type="GO" id="GO:0005524">
    <property type="term" value="F:ATP binding"/>
    <property type="evidence" value="ECO:0007669"/>
    <property type="project" value="UniProtKB-KW"/>
</dbReference>
<dbReference type="GO" id="GO:0004111">
    <property type="term" value="F:creatine kinase activity"/>
    <property type="evidence" value="ECO:0007669"/>
    <property type="project" value="InterPro"/>
</dbReference>
<dbReference type="GO" id="GO:0046314">
    <property type="term" value="P:phosphocreatine biosynthetic process"/>
    <property type="evidence" value="ECO:0007669"/>
    <property type="project" value="InterPro"/>
</dbReference>
<dbReference type="CDD" id="cd07932">
    <property type="entry name" value="arginine_kinase_like"/>
    <property type="match status" value="1"/>
</dbReference>
<dbReference type="FunFam" id="3.30.590.10:FF:000006">
    <property type="entry name" value="Arginine kinase 1"/>
    <property type="match status" value="1"/>
</dbReference>
<dbReference type="FunFam" id="1.10.135.10:FF:000003">
    <property type="entry name" value="Three-domain arginine kinase"/>
    <property type="match status" value="1"/>
</dbReference>
<dbReference type="Gene3D" id="1.10.135.10">
    <property type="entry name" value="ATP:guanido phosphotransferase, N-terminal domain"/>
    <property type="match status" value="1"/>
</dbReference>
<dbReference type="Gene3D" id="3.30.590.10">
    <property type="entry name" value="Glutamine synthetase/guanido kinase, catalytic domain"/>
    <property type="match status" value="1"/>
</dbReference>
<dbReference type="InterPro" id="IPR000749">
    <property type="entry name" value="ATP-guanido_PTrfase"/>
</dbReference>
<dbReference type="InterPro" id="IPR022415">
    <property type="entry name" value="ATP-guanido_PTrfase_AS"/>
</dbReference>
<dbReference type="InterPro" id="IPR022414">
    <property type="entry name" value="ATP-guanido_PTrfase_cat"/>
</dbReference>
<dbReference type="InterPro" id="IPR022413">
    <property type="entry name" value="ATP-guanido_PTrfase_N"/>
</dbReference>
<dbReference type="InterPro" id="IPR036802">
    <property type="entry name" value="ATP-guanido_PTrfase_N_sf"/>
</dbReference>
<dbReference type="InterPro" id="IPR014746">
    <property type="entry name" value="Gln_synth/guanido_kin_cat_dom"/>
</dbReference>
<dbReference type="PANTHER" id="PTHR11547:SF38">
    <property type="entry name" value="ARGININE KINASE 1-RELATED"/>
    <property type="match status" value="1"/>
</dbReference>
<dbReference type="PANTHER" id="PTHR11547">
    <property type="entry name" value="ARGININE OR CREATINE KINASE"/>
    <property type="match status" value="1"/>
</dbReference>
<dbReference type="Pfam" id="PF00217">
    <property type="entry name" value="ATP-gua_Ptrans"/>
    <property type="match status" value="1"/>
</dbReference>
<dbReference type="Pfam" id="PF02807">
    <property type="entry name" value="ATP-gua_PtransN"/>
    <property type="match status" value="1"/>
</dbReference>
<dbReference type="SUPFAM" id="SSF55931">
    <property type="entry name" value="Glutamine synthetase/guanido kinase"/>
    <property type="match status" value="1"/>
</dbReference>
<dbReference type="SUPFAM" id="SSF48034">
    <property type="entry name" value="Guanido kinase N-terminal domain"/>
    <property type="match status" value="1"/>
</dbReference>
<dbReference type="PROSITE" id="PS00112">
    <property type="entry name" value="PHOSPHAGEN_KINASE"/>
    <property type="match status" value="1"/>
</dbReference>
<dbReference type="PROSITE" id="PS51510">
    <property type="entry name" value="PHOSPHAGEN_KINASE_C"/>
    <property type="match status" value="1"/>
</dbReference>
<dbReference type="PROSITE" id="PS51509">
    <property type="entry name" value="PHOSPHAGEN_KINASE_N"/>
    <property type="match status" value="1"/>
</dbReference>
<protein>
    <recommendedName>
        <fullName>Arginine kinase</fullName>
        <shortName>AK</shortName>
        <ecNumber>2.7.3.3</ecNumber>
    </recommendedName>
</protein>
<organism>
    <name type="scientific">Artemia franciscana</name>
    <name type="common">Brine shrimp</name>
    <name type="synonym">Artemia sanfranciscana</name>
    <dbReference type="NCBI Taxonomy" id="6661"/>
    <lineage>
        <taxon>Eukaryota</taxon>
        <taxon>Metazoa</taxon>
        <taxon>Ecdysozoa</taxon>
        <taxon>Arthropoda</taxon>
        <taxon>Crustacea</taxon>
        <taxon>Branchiopoda</taxon>
        <taxon>Anostraca</taxon>
        <taxon>Artemiidae</taxon>
        <taxon>Artemia</taxon>
    </lineage>
</organism>
<keyword id="KW-0067">ATP-binding</keyword>
<keyword id="KW-0418">Kinase</keyword>
<keyword id="KW-0547">Nucleotide-binding</keyword>
<keyword id="KW-0808">Transferase</keyword>
<gene>
    <name type="primary">ARGK</name>
</gene>
<evidence type="ECO:0000250" key="1">
    <source>
        <dbReference type="UniProtKB" id="Q004B5"/>
    </source>
</evidence>
<evidence type="ECO:0000255" key="2">
    <source>
        <dbReference type="PROSITE-ProRule" id="PRU00842"/>
    </source>
</evidence>
<evidence type="ECO:0000255" key="3">
    <source>
        <dbReference type="PROSITE-ProRule" id="PRU00843"/>
    </source>
</evidence>
<comment type="catalytic activity">
    <reaction>
        <text>L-arginine + ATP = N(omega)-phospho-L-arginine + ADP + H(+)</text>
        <dbReference type="Rhea" id="RHEA:22940"/>
        <dbReference type="ChEBI" id="CHEBI:15378"/>
        <dbReference type="ChEBI" id="CHEBI:30616"/>
        <dbReference type="ChEBI" id="CHEBI:32682"/>
        <dbReference type="ChEBI" id="CHEBI:58477"/>
        <dbReference type="ChEBI" id="CHEBI:456216"/>
        <dbReference type="EC" id="2.7.3.3"/>
    </reaction>
</comment>
<comment type="similarity">
    <text evidence="2 3">Belongs to the ATP:guanido phosphotransferase family.</text>
</comment>
<proteinExistence type="evidence at transcript level"/>
<reference key="1">
    <citation type="submission" date="2001-10" db="EMBL/GenBank/DDBJ databases">
        <title>Cloning and characterization of arginine kinase cDNA from brine shrimp (Artemia franciscana).</title>
        <authorList>
            <person name="Chen T."/>
            <person name="MacRae T.H."/>
        </authorList>
    </citation>
    <scope>NUCLEOTIDE SEQUENCE [MRNA]</scope>
</reference>
<sequence length="356" mass="39976">MVDAGTLEKLEAGFQKLQAATDCKSLVKKYLTREVFDQLKTLKTSLGATLLDVIQSGVENLDSGVGIYAPDAESYTLFAPLFDPIIEDYHIGFTKNDSHPPSDFGDVNTLGDLDPDNKFVISTRVRCGRSLQGYPFNPCLTEAQYKEMEDKVSSTLNGLDGELKGTFYPLTGMAKEVQQQLIDDHFLFKEGDRFLQAANACRYWPTGRGIYHNDAKTFLVWCNEEDHLRIISMQKGGDLKAVYARLVNAVNEIEKRIPFSHHDRLGYLTFCPTNLGTTIRASVHIQLPKLAADRKRLEEVASKYNLQVRGTRGEHTEAEGGIYDISNKRRMGLTEYQAVKEMYDGIAELIKLEQSA</sequence>
<name>KARG_ARTSF</name>